<name>ACUC_BACSU</name>
<sequence>MRDSVFIYSPSYQTYMFHQEHPFNQQRVLLTYDLLKTINAFDDGDIVTPRLASEEELSLVHTDDYIQAVKLAGAGKLPAEEGESYGLGTEDTPVFAGMHEAASLLVGGTLTAADWVMSGQALHAANLGGGLHHGFRGRASGFCIYNDSAVAIQYIQKKYSARVLYIDTDAHHGDGVQFTFYDNPDVCTLSIHETGRYLFPGTGQIQEKGSGKGYGYSFNIPLDAFTEDDSFLEAYRTAASEVAAYFEPDVIISQNGADAHYYDPLTHLSATINIYEEIPRLAHTLAHQYCGGKWIAVGGGGYDIWRVVPRAWARIWLEMKGIDPGHEIPPEWIVKWQKQCPVALPSSWSDPADLYPPIPRKPEITEKNAQTVSKALYAIRSEQQRTK</sequence>
<protein>
    <recommendedName>
        <fullName>Acetoin utilization protein AcuC</fullName>
    </recommendedName>
</protein>
<gene>
    <name type="primary">acuC</name>
    <name type="ordered locus">BSU29710</name>
</gene>
<evidence type="ECO:0000305" key="1"/>
<dbReference type="EMBL" id="L17309">
    <property type="protein sequence ID" value="AAA68284.1"/>
    <property type="molecule type" value="Genomic_DNA"/>
</dbReference>
<dbReference type="EMBL" id="AF008220">
    <property type="protein sequence ID" value="AAC00394.1"/>
    <property type="molecule type" value="Genomic_DNA"/>
</dbReference>
<dbReference type="EMBL" id="AL009126">
    <property type="protein sequence ID" value="CAB14949.1"/>
    <property type="molecule type" value="Genomic_DNA"/>
</dbReference>
<dbReference type="PIR" id="S39643">
    <property type="entry name" value="S39643"/>
</dbReference>
<dbReference type="RefSeq" id="NP_390849.1">
    <property type="nucleotide sequence ID" value="NC_000964.3"/>
</dbReference>
<dbReference type="RefSeq" id="WP_004398517.1">
    <property type="nucleotide sequence ID" value="NZ_OZ025638.1"/>
</dbReference>
<dbReference type="SMR" id="P39067"/>
<dbReference type="FunCoup" id="P39067">
    <property type="interactions" value="500"/>
</dbReference>
<dbReference type="STRING" id="224308.BSU29710"/>
<dbReference type="PaxDb" id="224308-BSU29710"/>
<dbReference type="EnsemblBacteria" id="CAB14949">
    <property type="protein sequence ID" value="CAB14949"/>
    <property type="gene ID" value="BSU_29710"/>
</dbReference>
<dbReference type="GeneID" id="936834"/>
<dbReference type="KEGG" id="bsu:BSU29710"/>
<dbReference type="PATRIC" id="fig|224308.179.peg.3229"/>
<dbReference type="eggNOG" id="COG0123">
    <property type="taxonomic scope" value="Bacteria"/>
</dbReference>
<dbReference type="InParanoid" id="P39067"/>
<dbReference type="OrthoDB" id="9808367at2"/>
<dbReference type="PhylomeDB" id="P39067"/>
<dbReference type="BioCyc" id="BSUB:BSU29710-MONOMER"/>
<dbReference type="UniPathway" id="UPA00040"/>
<dbReference type="Proteomes" id="UP000001570">
    <property type="component" value="Chromosome"/>
</dbReference>
<dbReference type="GO" id="GO:0004407">
    <property type="term" value="F:histone deacetylase activity"/>
    <property type="evidence" value="ECO:0000318"/>
    <property type="project" value="GO_Central"/>
</dbReference>
<dbReference type="GO" id="GO:0045150">
    <property type="term" value="P:acetoin catabolic process"/>
    <property type="evidence" value="ECO:0007669"/>
    <property type="project" value="UniProtKB-UniPathway"/>
</dbReference>
<dbReference type="GO" id="GO:0040029">
    <property type="term" value="P:epigenetic regulation of gene expression"/>
    <property type="evidence" value="ECO:0000318"/>
    <property type="project" value="GO_Central"/>
</dbReference>
<dbReference type="GO" id="GO:0030435">
    <property type="term" value="P:sporulation resulting in formation of a cellular spore"/>
    <property type="evidence" value="ECO:0007669"/>
    <property type="project" value="UniProtKB-KW"/>
</dbReference>
<dbReference type="CDD" id="cd09994">
    <property type="entry name" value="HDAC_AcuC_like"/>
    <property type="match status" value="1"/>
</dbReference>
<dbReference type="Gene3D" id="3.40.800.20">
    <property type="entry name" value="Histone deacetylase domain"/>
    <property type="match status" value="1"/>
</dbReference>
<dbReference type="InterPro" id="IPR003085">
    <property type="entry name" value="AcuC"/>
</dbReference>
<dbReference type="InterPro" id="IPR050284">
    <property type="entry name" value="HDAC_PDAC"/>
</dbReference>
<dbReference type="InterPro" id="IPR000286">
    <property type="entry name" value="His_deacetylse"/>
</dbReference>
<dbReference type="InterPro" id="IPR023801">
    <property type="entry name" value="His_deacetylse_dom"/>
</dbReference>
<dbReference type="InterPro" id="IPR037138">
    <property type="entry name" value="His_deacetylse_dom_sf"/>
</dbReference>
<dbReference type="InterPro" id="IPR023696">
    <property type="entry name" value="Ureohydrolase_dom_sf"/>
</dbReference>
<dbReference type="PANTHER" id="PTHR10625:SF10">
    <property type="entry name" value="HISTONE DEACETYLASE HDAC1"/>
    <property type="match status" value="1"/>
</dbReference>
<dbReference type="PANTHER" id="PTHR10625">
    <property type="entry name" value="HISTONE DEACETYLASE HDAC1-RELATED"/>
    <property type="match status" value="1"/>
</dbReference>
<dbReference type="Pfam" id="PF00850">
    <property type="entry name" value="Hist_deacetyl"/>
    <property type="match status" value="1"/>
</dbReference>
<dbReference type="PRINTS" id="PR01272">
    <property type="entry name" value="ACUCPROTEIN"/>
</dbReference>
<dbReference type="PRINTS" id="PR01270">
    <property type="entry name" value="HDASUPER"/>
</dbReference>
<dbReference type="SUPFAM" id="SSF52768">
    <property type="entry name" value="Arginase/deacetylase"/>
    <property type="match status" value="1"/>
</dbReference>
<reference key="1">
    <citation type="journal article" date="1993" name="Mol. Microbiol.">
        <title>Identification of genes involved in utilization of acetate and acetoin in Bacillus subtilis.</title>
        <authorList>
            <person name="Grundy F.J."/>
            <person name="Waters D.A."/>
            <person name="Takova T.Y."/>
            <person name="Henkin T.M."/>
        </authorList>
    </citation>
    <scope>NUCLEOTIDE SEQUENCE [GENOMIC DNA]</scope>
    <source>
        <strain>168</strain>
    </source>
</reference>
<reference key="2">
    <citation type="journal article" date="1997" name="Microbiology">
        <title>Sequencing and functional annotation of the Bacillus subtilis genes in the 200 kb rrnB-dnaB region.</title>
        <authorList>
            <person name="Lapidus A."/>
            <person name="Galleron N."/>
            <person name="Sorokin A."/>
            <person name="Ehrlich S.D."/>
        </authorList>
    </citation>
    <scope>NUCLEOTIDE SEQUENCE [GENOMIC DNA]</scope>
    <source>
        <strain>168</strain>
    </source>
</reference>
<reference key="3">
    <citation type="journal article" date="1997" name="Nature">
        <title>The complete genome sequence of the Gram-positive bacterium Bacillus subtilis.</title>
        <authorList>
            <person name="Kunst F."/>
            <person name="Ogasawara N."/>
            <person name="Moszer I."/>
            <person name="Albertini A.M."/>
            <person name="Alloni G."/>
            <person name="Azevedo V."/>
            <person name="Bertero M.G."/>
            <person name="Bessieres P."/>
            <person name="Bolotin A."/>
            <person name="Borchert S."/>
            <person name="Borriss R."/>
            <person name="Boursier L."/>
            <person name="Brans A."/>
            <person name="Braun M."/>
            <person name="Brignell S.C."/>
            <person name="Bron S."/>
            <person name="Brouillet S."/>
            <person name="Bruschi C.V."/>
            <person name="Caldwell B."/>
            <person name="Capuano V."/>
            <person name="Carter N.M."/>
            <person name="Choi S.-K."/>
            <person name="Codani J.-J."/>
            <person name="Connerton I.F."/>
            <person name="Cummings N.J."/>
            <person name="Daniel R.A."/>
            <person name="Denizot F."/>
            <person name="Devine K.M."/>
            <person name="Duesterhoeft A."/>
            <person name="Ehrlich S.D."/>
            <person name="Emmerson P.T."/>
            <person name="Entian K.-D."/>
            <person name="Errington J."/>
            <person name="Fabret C."/>
            <person name="Ferrari E."/>
            <person name="Foulger D."/>
            <person name="Fritz C."/>
            <person name="Fujita M."/>
            <person name="Fujita Y."/>
            <person name="Fuma S."/>
            <person name="Galizzi A."/>
            <person name="Galleron N."/>
            <person name="Ghim S.-Y."/>
            <person name="Glaser P."/>
            <person name="Goffeau A."/>
            <person name="Golightly E.J."/>
            <person name="Grandi G."/>
            <person name="Guiseppi G."/>
            <person name="Guy B.J."/>
            <person name="Haga K."/>
            <person name="Haiech J."/>
            <person name="Harwood C.R."/>
            <person name="Henaut A."/>
            <person name="Hilbert H."/>
            <person name="Holsappel S."/>
            <person name="Hosono S."/>
            <person name="Hullo M.-F."/>
            <person name="Itaya M."/>
            <person name="Jones L.-M."/>
            <person name="Joris B."/>
            <person name="Karamata D."/>
            <person name="Kasahara Y."/>
            <person name="Klaerr-Blanchard M."/>
            <person name="Klein C."/>
            <person name="Kobayashi Y."/>
            <person name="Koetter P."/>
            <person name="Koningstein G."/>
            <person name="Krogh S."/>
            <person name="Kumano M."/>
            <person name="Kurita K."/>
            <person name="Lapidus A."/>
            <person name="Lardinois S."/>
            <person name="Lauber J."/>
            <person name="Lazarevic V."/>
            <person name="Lee S.-M."/>
            <person name="Levine A."/>
            <person name="Liu H."/>
            <person name="Masuda S."/>
            <person name="Mauel C."/>
            <person name="Medigue C."/>
            <person name="Medina N."/>
            <person name="Mellado R.P."/>
            <person name="Mizuno M."/>
            <person name="Moestl D."/>
            <person name="Nakai S."/>
            <person name="Noback M."/>
            <person name="Noone D."/>
            <person name="O'Reilly M."/>
            <person name="Ogawa K."/>
            <person name="Ogiwara A."/>
            <person name="Oudega B."/>
            <person name="Park S.-H."/>
            <person name="Parro V."/>
            <person name="Pohl T.M."/>
            <person name="Portetelle D."/>
            <person name="Porwollik S."/>
            <person name="Prescott A.M."/>
            <person name="Presecan E."/>
            <person name="Pujic P."/>
            <person name="Purnelle B."/>
            <person name="Rapoport G."/>
            <person name="Rey M."/>
            <person name="Reynolds S."/>
            <person name="Rieger M."/>
            <person name="Rivolta C."/>
            <person name="Rocha E."/>
            <person name="Roche B."/>
            <person name="Rose M."/>
            <person name="Sadaie Y."/>
            <person name="Sato T."/>
            <person name="Scanlan E."/>
            <person name="Schleich S."/>
            <person name="Schroeter R."/>
            <person name="Scoffone F."/>
            <person name="Sekiguchi J."/>
            <person name="Sekowska A."/>
            <person name="Seror S.J."/>
            <person name="Serror P."/>
            <person name="Shin B.-S."/>
            <person name="Soldo B."/>
            <person name="Sorokin A."/>
            <person name="Tacconi E."/>
            <person name="Takagi T."/>
            <person name="Takahashi H."/>
            <person name="Takemaru K."/>
            <person name="Takeuchi M."/>
            <person name="Tamakoshi A."/>
            <person name="Tanaka T."/>
            <person name="Terpstra P."/>
            <person name="Tognoni A."/>
            <person name="Tosato V."/>
            <person name="Uchiyama S."/>
            <person name="Vandenbol M."/>
            <person name="Vannier F."/>
            <person name="Vassarotti A."/>
            <person name="Viari A."/>
            <person name="Wambutt R."/>
            <person name="Wedler E."/>
            <person name="Wedler H."/>
            <person name="Weitzenegger T."/>
            <person name="Winters P."/>
            <person name="Wipat A."/>
            <person name="Yamamoto H."/>
            <person name="Yamane K."/>
            <person name="Yasumoto K."/>
            <person name="Yata K."/>
            <person name="Yoshida K."/>
            <person name="Yoshikawa H.-F."/>
            <person name="Zumstein E."/>
            <person name="Yoshikawa H."/>
            <person name="Danchin A."/>
        </authorList>
    </citation>
    <scope>NUCLEOTIDE SEQUENCE [LARGE SCALE GENOMIC DNA]</scope>
    <source>
        <strain>168</strain>
    </source>
</reference>
<keyword id="KW-0006">Acetoin catabolism</keyword>
<keyword id="KW-1185">Reference proteome</keyword>
<keyword id="KW-0749">Sporulation</keyword>
<organism>
    <name type="scientific">Bacillus subtilis (strain 168)</name>
    <dbReference type="NCBI Taxonomy" id="224308"/>
    <lineage>
        <taxon>Bacteria</taxon>
        <taxon>Bacillati</taxon>
        <taxon>Bacillota</taxon>
        <taxon>Bacilli</taxon>
        <taxon>Bacillales</taxon>
        <taxon>Bacillaceae</taxon>
        <taxon>Bacillus</taxon>
    </lineage>
</organism>
<comment type="function">
    <text>Role in growth and sporulation on acetoin or butanediol. Involved in the breakdown of these compounds used as a carbon source.</text>
</comment>
<comment type="pathway">
    <text>Ketone degradation; acetoin degradation.</text>
</comment>
<comment type="similarity">
    <text evidence="1">Belongs to the histone deacetylase family.</text>
</comment>
<feature type="chain" id="PRO_0000114729" description="Acetoin utilization protein AcuC">
    <location>
        <begin position="1"/>
        <end position="387"/>
    </location>
</feature>
<proteinExistence type="inferred from homology"/>
<accession>P39067</accession>